<gene>
    <name type="primary">COL15</name>
    <name type="ordered locus">At1g28050</name>
    <name type="ORF">F13K9.15</name>
</gene>
<accession>Q9C7E8</accession>
<name>COL15_ARATH</name>
<evidence type="ECO:0000255" key="1"/>
<evidence type="ECO:0000255" key="2">
    <source>
        <dbReference type="PROSITE-ProRule" id="PRU00024"/>
    </source>
</evidence>
<evidence type="ECO:0000255" key="3">
    <source>
        <dbReference type="PROSITE-ProRule" id="PRU00357"/>
    </source>
</evidence>
<evidence type="ECO:0000256" key="4">
    <source>
        <dbReference type="SAM" id="MobiDB-lite"/>
    </source>
</evidence>
<evidence type="ECO:0000305" key="5"/>
<reference key="1">
    <citation type="journal article" date="2000" name="Nature">
        <title>Sequence and analysis of chromosome 1 of the plant Arabidopsis thaliana.</title>
        <authorList>
            <person name="Theologis A."/>
            <person name="Ecker J.R."/>
            <person name="Palm C.J."/>
            <person name="Federspiel N.A."/>
            <person name="Kaul S."/>
            <person name="White O."/>
            <person name="Alonso J."/>
            <person name="Altafi H."/>
            <person name="Araujo R."/>
            <person name="Bowman C.L."/>
            <person name="Brooks S.Y."/>
            <person name="Buehler E."/>
            <person name="Chan A."/>
            <person name="Chao Q."/>
            <person name="Chen H."/>
            <person name="Cheuk R.F."/>
            <person name="Chin C.W."/>
            <person name="Chung M.K."/>
            <person name="Conn L."/>
            <person name="Conway A.B."/>
            <person name="Conway A.R."/>
            <person name="Creasy T.H."/>
            <person name="Dewar K."/>
            <person name="Dunn P."/>
            <person name="Etgu P."/>
            <person name="Feldblyum T.V."/>
            <person name="Feng J.-D."/>
            <person name="Fong B."/>
            <person name="Fujii C.Y."/>
            <person name="Gill J.E."/>
            <person name="Goldsmith A.D."/>
            <person name="Haas B."/>
            <person name="Hansen N.F."/>
            <person name="Hughes B."/>
            <person name="Huizar L."/>
            <person name="Hunter J.L."/>
            <person name="Jenkins J."/>
            <person name="Johnson-Hopson C."/>
            <person name="Khan S."/>
            <person name="Khaykin E."/>
            <person name="Kim C.J."/>
            <person name="Koo H.L."/>
            <person name="Kremenetskaia I."/>
            <person name="Kurtz D.B."/>
            <person name="Kwan A."/>
            <person name="Lam B."/>
            <person name="Langin-Hooper S."/>
            <person name="Lee A."/>
            <person name="Lee J.M."/>
            <person name="Lenz C.A."/>
            <person name="Li J.H."/>
            <person name="Li Y.-P."/>
            <person name="Lin X."/>
            <person name="Liu S.X."/>
            <person name="Liu Z.A."/>
            <person name="Luros J.S."/>
            <person name="Maiti R."/>
            <person name="Marziali A."/>
            <person name="Militscher J."/>
            <person name="Miranda M."/>
            <person name="Nguyen M."/>
            <person name="Nierman W.C."/>
            <person name="Osborne B.I."/>
            <person name="Pai G."/>
            <person name="Peterson J."/>
            <person name="Pham P.K."/>
            <person name="Rizzo M."/>
            <person name="Rooney T."/>
            <person name="Rowley D."/>
            <person name="Sakano H."/>
            <person name="Salzberg S.L."/>
            <person name="Schwartz J.R."/>
            <person name="Shinn P."/>
            <person name="Southwick A.M."/>
            <person name="Sun H."/>
            <person name="Tallon L.J."/>
            <person name="Tambunga G."/>
            <person name="Toriumi M.J."/>
            <person name="Town C.D."/>
            <person name="Utterback T."/>
            <person name="Van Aken S."/>
            <person name="Vaysberg M."/>
            <person name="Vysotskaia V.S."/>
            <person name="Walker M."/>
            <person name="Wu D."/>
            <person name="Yu G."/>
            <person name="Fraser C.M."/>
            <person name="Venter J.C."/>
            <person name="Davis R.W."/>
        </authorList>
    </citation>
    <scope>NUCLEOTIDE SEQUENCE [LARGE SCALE GENOMIC DNA]</scope>
    <source>
        <strain>cv. Columbia</strain>
    </source>
</reference>
<reference key="2">
    <citation type="journal article" date="2017" name="Plant J.">
        <title>Araport11: a complete reannotation of the Arabidopsis thaliana reference genome.</title>
        <authorList>
            <person name="Cheng C.Y."/>
            <person name="Krishnakumar V."/>
            <person name="Chan A.P."/>
            <person name="Thibaud-Nissen F."/>
            <person name="Schobel S."/>
            <person name="Town C.D."/>
        </authorList>
    </citation>
    <scope>GENOME REANNOTATION</scope>
    <source>
        <strain>cv. Columbia</strain>
    </source>
</reference>
<reference key="3">
    <citation type="journal article" date="2003" name="Science">
        <title>Empirical analysis of transcriptional activity in the Arabidopsis genome.</title>
        <authorList>
            <person name="Yamada K."/>
            <person name="Lim J."/>
            <person name="Dale J.M."/>
            <person name="Chen H."/>
            <person name="Shinn P."/>
            <person name="Palm C.J."/>
            <person name="Southwick A.M."/>
            <person name="Wu H.C."/>
            <person name="Kim C.J."/>
            <person name="Nguyen M."/>
            <person name="Pham P.K."/>
            <person name="Cheuk R.F."/>
            <person name="Karlin-Newmann G."/>
            <person name="Liu S.X."/>
            <person name="Lam B."/>
            <person name="Sakano H."/>
            <person name="Wu T."/>
            <person name="Yu G."/>
            <person name="Miranda M."/>
            <person name="Quach H.L."/>
            <person name="Tripp M."/>
            <person name="Chang C.H."/>
            <person name="Lee J.M."/>
            <person name="Toriumi M.J."/>
            <person name="Chan M.M."/>
            <person name="Tang C.C."/>
            <person name="Onodera C.S."/>
            <person name="Deng J.M."/>
            <person name="Akiyama K."/>
            <person name="Ansari Y."/>
            <person name="Arakawa T."/>
            <person name="Banh J."/>
            <person name="Banno F."/>
            <person name="Bowser L."/>
            <person name="Brooks S.Y."/>
            <person name="Carninci P."/>
            <person name="Chao Q."/>
            <person name="Choy N."/>
            <person name="Enju A."/>
            <person name="Goldsmith A.D."/>
            <person name="Gurjal M."/>
            <person name="Hansen N.F."/>
            <person name="Hayashizaki Y."/>
            <person name="Johnson-Hopson C."/>
            <person name="Hsuan V.W."/>
            <person name="Iida K."/>
            <person name="Karnes M."/>
            <person name="Khan S."/>
            <person name="Koesema E."/>
            <person name="Ishida J."/>
            <person name="Jiang P.X."/>
            <person name="Jones T."/>
            <person name="Kawai J."/>
            <person name="Kamiya A."/>
            <person name="Meyers C."/>
            <person name="Nakajima M."/>
            <person name="Narusaka M."/>
            <person name="Seki M."/>
            <person name="Sakurai T."/>
            <person name="Satou M."/>
            <person name="Tamse R."/>
            <person name="Vaysberg M."/>
            <person name="Wallender E.K."/>
            <person name="Wong C."/>
            <person name="Yamamura Y."/>
            <person name="Yuan S."/>
            <person name="Shinozaki K."/>
            <person name="Davis R.W."/>
            <person name="Theologis A."/>
            <person name="Ecker J.R."/>
        </authorList>
    </citation>
    <scope>NUCLEOTIDE SEQUENCE [LARGE SCALE MRNA]</scope>
    <source>
        <strain>cv. Columbia</strain>
    </source>
</reference>
<reference key="4">
    <citation type="journal article" date="2003" name="Plant Physiol.">
        <title>The evolution of CONSTANS-like gene families in barley, rice, and Arabidopsis.</title>
        <authorList>
            <person name="Griffiths S."/>
            <person name="Dunford R.P."/>
            <person name="Coupland G."/>
            <person name="Laurie D.A."/>
        </authorList>
    </citation>
    <scope>GENE FAMILY</scope>
    <scope>NOMENCLATURE</scope>
</reference>
<keyword id="KW-0175">Coiled coil</keyword>
<keyword id="KW-0479">Metal-binding</keyword>
<keyword id="KW-0539">Nucleus</keyword>
<keyword id="KW-1185">Reference proteome</keyword>
<keyword id="KW-0677">Repeat</keyword>
<keyword id="KW-0862">Zinc</keyword>
<keyword id="KW-0863">Zinc-finger</keyword>
<dbReference type="EMBL" id="AC069471">
    <property type="protein sequence ID" value="AAG51489.1"/>
    <property type="molecule type" value="Genomic_DNA"/>
</dbReference>
<dbReference type="EMBL" id="CP002684">
    <property type="protein sequence ID" value="AEE30906.1"/>
    <property type="molecule type" value="Genomic_DNA"/>
</dbReference>
<dbReference type="EMBL" id="AY037206">
    <property type="protein sequence ID" value="AAK59791.1"/>
    <property type="molecule type" value="mRNA"/>
</dbReference>
<dbReference type="EMBL" id="BT002681">
    <property type="protein sequence ID" value="AAO11597.1"/>
    <property type="molecule type" value="mRNA"/>
</dbReference>
<dbReference type="PIR" id="B86406">
    <property type="entry name" value="B86406"/>
</dbReference>
<dbReference type="SMR" id="Q9C7E8"/>
<dbReference type="BioGRID" id="24933">
    <property type="interactions" value="17"/>
</dbReference>
<dbReference type="FunCoup" id="Q9C7E8">
    <property type="interactions" value="85"/>
</dbReference>
<dbReference type="IntAct" id="Q9C7E8">
    <property type="interactions" value="20"/>
</dbReference>
<dbReference type="STRING" id="3702.Q9C7E8"/>
<dbReference type="PaxDb" id="3702-AT1G28050.1"/>
<dbReference type="ProteomicsDB" id="241099"/>
<dbReference type="EnsemblPlants" id="AT1G28050.1">
    <property type="protein sequence ID" value="AT1G28050.1"/>
    <property type="gene ID" value="AT1G28050"/>
</dbReference>
<dbReference type="GeneID" id="839698"/>
<dbReference type="Gramene" id="AT1G28050.1">
    <property type="protein sequence ID" value="AT1G28050.1"/>
    <property type="gene ID" value="AT1G28050"/>
</dbReference>
<dbReference type="KEGG" id="ath:AT1G28050"/>
<dbReference type="Araport" id="AT1G28050"/>
<dbReference type="TAIR" id="AT1G28050">
    <property type="gene designation" value="BBX13"/>
</dbReference>
<dbReference type="eggNOG" id="ENOG502QW4H">
    <property type="taxonomic scope" value="Eukaryota"/>
</dbReference>
<dbReference type="HOGENOM" id="CLU_028225_0_0_1"/>
<dbReference type="InParanoid" id="Q9C7E8"/>
<dbReference type="OMA" id="MIKNFGE"/>
<dbReference type="OrthoDB" id="153872at2759"/>
<dbReference type="PhylomeDB" id="Q9C7E8"/>
<dbReference type="PRO" id="PR:Q9C7E8"/>
<dbReference type="Proteomes" id="UP000006548">
    <property type="component" value="Chromosome 1"/>
</dbReference>
<dbReference type="ExpressionAtlas" id="Q9C7E8">
    <property type="expression patterns" value="baseline and differential"/>
</dbReference>
<dbReference type="GO" id="GO:0005634">
    <property type="term" value="C:nucleus"/>
    <property type="evidence" value="ECO:0007669"/>
    <property type="project" value="UniProtKB-SubCell"/>
</dbReference>
<dbReference type="GO" id="GO:0003700">
    <property type="term" value="F:DNA-binding transcription factor activity"/>
    <property type="evidence" value="ECO:0000250"/>
    <property type="project" value="TAIR"/>
</dbReference>
<dbReference type="GO" id="GO:0008270">
    <property type="term" value="F:zinc ion binding"/>
    <property type="evidence" value="ECO:0007669"/>
    <property type="project" value="UniProtKB-KW"/>
</dbReference>
<dbReference type="GO" id="GO:0006355">
    <property type="term" value="P:regulation of DNA-templated transcription"/>
    <property type="evidence" value="ECO:0000304"/>
    <property type="project" value="TAIR"/>
</dbReference>
<dbReference type="CDD" id="cd19821">
    <property type="entry name" value="Bbox1_BBX-like"/>
    <property type="match status" value="1"/>
</dbReference>
<dbReference type="InterPro" id="IPR010402">
    <property type="entry name" value="CCT_domain"/>
</dbReference>
<dbReference type="InterPro" id="IPR049808">
    <property type="entry name" value="CONSTANS-like_Bbox1"/>
</dbReference>
<dbReference type="InterPro" id="IPR000315">
    <property type="entry name" value="Znf_B-box"/>
</dbReference>
<dbReference type="PANTHER" id="PTHR31717">
    <property type="entry name" value="ZINC FINGER PROTEIN CONSTANS-LIKE 10"/>
    <property type="match status" value="1"/>
</dbReference>
<dbReference type="PANTHER" id="PTHR31717:SF45">
    <property type="entry name" value="ZINC FINGER PROTEIN CONSTANS-LIKE 14-RELATED"/>
    <property type="match status" value="1"/>
</dbReference>
<dbReference type="Pfam" id="PF06203">
    <property type="entry name" value="CCT"/>
    <property type="match status" value="1"/>
</dbReference>
<dbReference type="SMART" id="SM00336">
    <property type="entry name" value="BBOX"/>
    <property type="match status" value="2"/>
</dbReference>
<dbReference type="PROSITE" id="PS51017">
    <property type="entry name" value="CCT"/>
    <property type="match status" value="1"/>
</dbReference>
<dbReference type="PROSITE" id="PS50119">
    <property type="entry name" value="ZF_BBOX"/>
    <property type="match status" value="2"/>
</dbReference>
<feature type="chain" id="PRO_0000113292" description="Zinc finger protein CONSTANS-LIKE 15">
    <location>
        <begin position="1"/>
        <end position="433"/>
    </location>
</feature>
<feature type="domain" description="CCT" evidence="3">
    <location>
        <begin position="385"/>
        <end position="427"/>
    </location>
</feature>
<feature type="zinc finger region" description="B box-type 1; atypical" evidence="2">
    <location>
        <begin position="9"/>
        <end position="51"/>
    </location>
</feature>
<feature type="zinc finger region" description="B box-type 2; atypical" evidence="2">
    <location>
        <begin position="52"/>
        <end position="94"/>
    </location>
</feature>
<feature type="region of interest" description="Disordered" evidence="4">
    <location>
        <begin position="319"/>
        <end position="353"/>
    </location>
</feature>
<feature type="coiled-coil region" evidence="1">
    <location>
        <begin position="374"/>
        <end position="398"/>
    </location>
</feature>
<feature type="compositionally biased region" description="Polar residues" evidence="4">
    <location>
        <begin position="324"/>
        <end position="340"/>
    </location>
</feature>
<feature type="binding site" evidence="2">
    <location>
        <position position="9"/>
    </location>
    <ligand>
        <name>Zn(2+)</name>
        <dbReference type="ChEBI" id="CHEBI:29105"/>
        <label>1</label>
    </ligand>
</feature>
<feature type="binding site" evidence="2">
    <location>
        <position position="12"/>
    </location>
    <ligand>
        <name>Zn(2+)</name>
        <dbReference type="ChEBI" id="CHEBI:29105"/>
        <label>1</label>
    </ligand>
</feature>
<feature type="binding site" evidence="2">
    <location>
        <position position="32"/>
    </location>
    <ligand>
        <name>Zn(2+)</name>
        <dbReference type="ChEBI" id="CHEBI:29105"/>
        <label>1</label>
    </ligand>
</feature>
<feature type="binding site" evidence="2">
    <location>
        <position position="37"/>
    </location>
    <ligand>
        <name>Zn(2+)</name>
        <dbReference type="ChEBI" id="CHEBI:29105"/>
        <label>1</label>
    </ligand>
</feature>
<feature type="binding site" evidence="2">
    <location>
        <position position="52"/>
    </location>
    <ligand>
        <name>Zn(2+)</name>
        <dbReference type="ChEBI" id="CHEBI:29105"/>
        <label>2</label>
    </ligand>
</feature>
<feature type="binding site" evidence="2">
    <location>
        <position position="55"/>
    </location>
    <ligand>
        <name>Zn(2+)</name>
        <dbReference type="ChEBI" id="CHEBI:29105"/>
        <label>2</label>
    </ligand>
</feature>
<feature type="binding site" evidence="2">
    <location>
        <position position="75"/>
    </location>
    <ligand>
        <name>Zn(2+)</name>
        <dbReference type="ChEBI" id="CHEBI:29105"/>
        <label>2</label>
    </ligand>
</feature>
<feature type="binding site" evidence="2">
    <location>
        <position position="80"/>
    </location>
    <ligand>
        <name>Zn(2+)</name>
        <dbReference type="ChEBI" id="CHEBI:29105"/>
        <label>2</label>
    </ligand>
</feature>
<comment type="interaction">
    <interactant intactId="EBI-2465998">
        <id>Q9C7E8</id>
    </interactant>
    <interactant intactId="EBI-15192709">
        <id>Q6NLH4</id>
        <label>BBX29</label>
    </interactant>
    <organismsDiffer>false</organismsDiffer>
    <experiments>3</experiments>
</comment>
<comment type="interaction">
    <interactant intactId="EBI-2465998">
        <id>Q9C7E8</id>
    </interactant>
    <interactant intactId="EBI-4425264">
        <id>Q9LJB7</id>
        <label>BBX32</label>
    </interactant>
    <organismsDiffer>false</organismsDiffer>
    <experiments>3</experiments>
</comment>
<comment type="interaction">
    <interactant intactId="EBI-2465998">
        <id>Q9C7E8</id>
    </interactant>
    <interactant intactId="EBI-15191571">
        <id>Q4PSE2</id>
        <label>NFYC8</label>
    </interactant>
    <organismsDiffer>false</organismsDiffer>
    <experiments>3</experiments>
</comment>
<comment type="interaction">
    <interactant intactId="EBI-2465998">
        <id>Q9C7E8</id>
    </interactant>
    <interactant intactId="EBI-2466050">
        <id>Q8L4B2</id>
        <label>NFYC9</label>
    </interactant>
    <organismsDiffer>false</organismsDiffer>
    <experiments>3</experiments>
</comment>
<comment type="subcellular location">
    <subcellularLocation>
        <location evidence="3">Nucleus</location>
    </subcellularLocation>
</comment>
<comment type="similarity">
    <text evidence="5">Belongs to the CONSTANS family.</text>
</comment>
<proteinExistence type="evidence at protein level"/>
<organism>
    <name type="scientific">Arabidopsis thaliana</name>
    <name type="common">Mouse-ear cress</name>
    <dbReference type="NCBI Taxonomy" id="3702"/>
    <lineage>
        <taxon>Eukaryota</taxon>
        <taxon>Viridiplantae</taxon>
        <taxon>Streptophyta</taxon>
        <taxon>Embryophyta</taxon>
        <taxon>Tracheophyta</taxon>
        <taxon>Spermatophyta</taxon>
        <taxon>Magnoliopsida</taxon>
        <taxon>eudicotyledons</taxon>
        <taxon>Gunneridae</taxon>
        <taxon>Pentapetalae</taxon>
        <taxon>rosids</taxon>
        <taxon>malvids</taxon>
        <taxon>Brassicales</taxon>
        <taxon>Brassicaceae</taxon>
        <taxon>Camelineae</taxon>
        <taxon>Arabidopsis</taxon>
    </lineage>
</organism>
<protein>
    <recommendedName>
        <fullName>Zinc finger protein CONSTANS-LIKE 15</fullName>
    </recommendedName>
</protein>
<sequence length="433" mass="47606">MSSSERVPCDFCGERTAVLFCRADTAKLCLPCDQQVHTANLLSRKHVRSQICDNCGNEPVSVRCFTDNLILCQECDWDVHGSCSVSDAHVRSAVEGFSGCPSALELAALWGLDLEQGRKDEENQVPMMAMMMDNFGMQLDSWVLGSNELIVPSDTTFKKRGSCGSSCGRYKQVLCKQLEELLKSGVVGGDGDDGDRDRDCDREGACDGDGDGEAGEGLMVPEMSERLKWSRDVEEINGGGGGGVNQQWNATTTNPSGGQSSQIWDFNLGQSRGPEDTSRVEAAYVGKGAASSFTINNFVDHMNETCSTNVKGVKEIKKDDYKRSTSGQVQPTKSESNNRPITFGSEKGSNSSSDLHFTEHIAGTSCKTTRLVATKADLERLAQNRGDAMQRYKEKRKTRRYDKTIRYESRKARADTRLRVRGRFVKASEAPYP</sequence>